<reference key="1">
    <citation type="journal article" date="2005" name="Science">
        <title>The transcriptional landscape of the mammalian genome.</title>
        <authorList>
            <person name="Carninci P."/>
            <person name="Kasukawa T."/>
            <person name="Katayama S."/>
            <person name="Gough J."/>
            <person name="Frith M.C."/>
            <person name="Maeda N."/>
            <person name="Oyama R."/>
            <person name="Ravasi T."/>
            <person name="Lenhard B."/>
            <person name="Wells C."/>
            <person name="Kodzius R."/>
            <person name="Shimokawa K."/>
            <person name="Bajic V.B."/>
            <person name="Brenner S.E."/>
            <person name="Batalov S."/>
            <person name="Forrest A.R."/>
            <person name="Zavolan M."/>
            <person name="Davis M.J."/>
            <person name="Wilming L.G."/>
            <person name="Aidinis V."/>
            <person name="Allen J.E."/>
            <person name="Ambesi-Impiombato A."/>
            <person name="Apweiler R."/>
            <person name="Aturaliya R.N."/>
            <person name="Bailey T.L."/>
            <person name="Bansal M."/>
            <person name="Baxter L."/>
            <person name="Beisel K.W."/>
            <person name="Bersano T."/>
            <person name="Bono H."/>
            <person name="Chalk A.M."/>
            <person name="Chiu K.P."/>
            <person name="Choudhary V."/>
            <person name="Christoffels A."/>
            <person name="Clutterbuck D.R."/>
            <person name="Crowe M.L."/>
            <person name="Dalla E."/>
            <person name="Dalrymple B.P."/>
            <person name="de Bono B."/>
            <person name="Della Gatta G."/>
            <person name="di Bernardo D."/>
            <person name="Down T."/>
            <person name="Engstrom P."/>
            <person name="Fagiolini M."/>
            <person name="Faulkner G."/>
            <person name="Fletcher C.F."/>
            <person name="Fukushima T."/>
            <person name="Furuno M."/>
            <person name="Futaki S."/>
            <person name="Gariboldi M."/>
            <person name="Georgii-Hemming P."/>
            <person name="Gingeras T.R."/>
            <person name="Gojobori T."/>
            <person name="Green R.E."/>
            <person name="Gustincich S."/>
            <person name="Harbers M."/>
            <person name="Hayashi Y."/>
            <person name="Hensch T.K."/>
            <person name="Hirokawa N."/>
            <person name="Hill D."/>
            <person name="Huminiecki L."/>
            <person name="Iacono M."/>
            <person name="Ikeo K."/>
            <person name="Iwama A."/>
            <person name="Ishikawa T."/>
            <person name="Jakt M."/>
            <person name="Kanapin A."/>
            <person name="Katoh M."/>
            <person name="Kawasawa Y."/>
            <person name="Kelso J."/>
            <person name="Kitamura H."/>
            <person name="Kitano H."/>
            <person name="Kollias G."/>
            <person name="Krishnan S.P."/>
            <person name="Kruger A."/>
            <person name="Kummerfeld S.K."/>
            <person name="Kurochkin I.V."/>
            <person name="Lareau L.F."/>
            <person name="Lazarevic D."/>
            <person name="Lipovich L."/>
            <person name="Liu J."/>
            <person name="Liuni S."/>
            <person name="McWilliam S."/>
            <person name="Madan Babu M."/>
            <person name="Madera M."/>
            <person name="Marchionni L."/>
            <person name="Matsuda H."/>
            <person name="Matsuzawa S."/>
            <person name="Miki H."/>
            <person name="Mignone F."/>
            <person name="Miyake S."/>
            <person name="Morris K."/>
            <person name="Mottagui-Tabar S."/>
            <person name="Mulder N."/>
            <person name="Nakano N."/>
            <person name="Nakauchi H."/>
            <person name="Ng P."/>
            <person name="Nilsson R."/>
            <person name="Nishiguchi S."/>
            <person name="Nishikawa S."/>
            <person name="Nori F."/>
            <person name="Ohara O."/>
            <person name="Okazaki Y."/>
            <person name="Orlando V."/>
            <person name="Pang K.C."/>
            <person name="Pavan W.J."/>
            <person name="Pavesi G."/>
            <person name="Pesole G."/>
            <person name="Petrovsky N."/>
            <person name="Piazza S."/>
            <person name="Reed J."/>
            <person name="Reid J.F."/>
            <person name="Ring B.Z."/>
            <person name="Ringwald M."/>
            <person name="Rost B."/>
            <person name="Ruan Y."/>
            <person name="Salzberg S.L."/>
            <person name="Sandelin A."/>
            <person name="Schneider C."/>
            <person name="Schoenbach C."/>
            <person name="Sekiguchi K."/>
            <person name="Semple C.A."/>
            <person name="Seno S."/>
            <person name="Sessa L."/>
            <person name="Sheng Y."/>
            <person name="Shibata Y."/>
            <person name="Shimada H."/>
            <person name="Shimada K."/>
            <person name="Silva D."/>
            <person name="Sinclair B."/>
            <person name="Sperling S."/>
            <person name="Stupka E."/>
            <person name="Sugiura K."/>
            <person name="Sultana R."/>
            <person name="Takenaka Y."/>
            <person name="Taki K."/>
            <person name="Tammoja K."/>
            <person name="Tan S.L."/>
            <person name="Tang S."/>
            <person name="Taylor M.S."/>
            <person name="Tegner J."/>
            <person name="Teichmann S.A."/>
            <person name="Ueda H.R."/>
            <person name="van Nimwegen E."/>
            <person name="Verardo R."/>
            <person name="Wei C.L."/>
            <person name="Yagi K."/>
            <person name="Yamanishi H."/>
            <person name="Zabarovsky E."/>
            <person name="Zhu S."/>
            <person name="Zimmer A."/>
            <person name="Hide W."/>
            <person name="Bult C."/>
            <person name="Grimmond S.M."/>
            <person name="Teasdale R.D."/>
            <person name="Liu E.T."/>
            <person name="Brusic V."/>
            <person name="Quackenbush J."/>
            <person name="Wahlestedt C."/>
            <person name="Mattick J.S."/>
            <person name="Hume D.A."/>
            <person name="Kai C."/>
            <person name="Sasaki D."/>
            <person name="Tomaru Y."/>
            <person name="Fukuda S."/>
            <person name="Kanamori-Katayama M."/>
            <person name="Suzuki M."/>
            <person name="Aoki J."/>
            <person name="Arakawa T."/>
            <person name="Iida J."/>
            <person name="Imamura K."/>
            <person name="Itoh M."/>
            <person name="Kato T."/>
            <person name="Kawaji H."/>
            <person name="Kawagashira N."/>
            <person name="Kawashima T."/>
            <person name="Kojima M."/>
            <person name="Kondo S."/>
            <person name="Konno H."/>
            <person name="Nakano K."/>
            <person name="Ninomiya N."/>
            <person name="Nishio T."/>
            <person name="Okada M."/>
            <person name="Plessy C."/>
            <person name="Shibata K."/>
            <person name="Shiraki T."/>
            <person name="Suzuki S."/>
            <person name="Tagami M."/>
            <person name="Waki K."/>
            <person name="Watahiki A."/>
            <person name="Okamura-Oho Y."/>
            <person name="Suzuki H."/>
            <person name="Kawai J."/>
            <person name="Hayashizaki Y."/>
        </authorList>
    </citation>
    <scope>NUCLEOTIDE SEQUENCE [LARGE SCALE MRNA]</scope>
    <source>
        <strain>C57BL/6J</strain>
        <strain>NOD</strain>
        <tissue>Colon</tissue>
        <tissue>Embryo</tissue>
        <tissue>Forelimb</tissue>
        <tissue>Mammary gland</tissue>
    </source>
</reference>
<reference key="2">
    <citation type="journal article" date="2004" name="Genome Res.">
        <title>The status, quality, and expansion of the NIH full-length cDNA project: the Mammalian Gene Collection (MGC).</title>
        <authorList>
            <consortium name="The MGC Project Team"/>
        </authorList>
    </citation>
    <scope>NUCLEOTIDE SEQUENCE [LARGE SCALE MRNA]</scope>
    <source>
        <strain>Czech II</strain>
        <tissue>Mammary tumor</tissue>
    </source>
</reference>
<evidence type="ECO:0000250" key="1">
    <source>
        <dbReference type="UniProtKB" id="Q91ZR7"/>
    </source>
</evidence>
<evidence type="ECO:0000250" key="2">
    <source>
        <dbReference type="UniProtKB" id="Q96G79"/>
    </source>
</evidence>
<evidence type="ECO:0000255" key="3"/>
<evidence type="ECO:0000305" key="4"/>
<evidence type="ECO:0000312" key="5">
    <source>
        <dbReference type="MGI" id="MGI:1915093"/>
    </source>
</evidence>
<protein>
    <recommendedName>
        <fullName evidence="4">Probable UDP-sugar transporter protein SLC35A4</fullName>
    </recommendedName>
    <alternativeName>
        <fullName evidence="5">Solute carrier family 35 member A4</fullName>
    </alternativeName>
</protein>
<name>S35A4_MOUSE</name>
<dbReference type="EMBL" id="AK011633">
    <property type="protein sequence ID" value="BAB27747.1"/>
    <property type="molecule type" value="mRNA"/>
</dbReference>
<dbReference type="EMBL" id="AK018546">
    <property type="protein sequence ID" value="BAB31267.1"/>
    <property type="molecule type" value="mRNA"/>
</dbReference>
<dbReference type="EMBL" id="AK031132">
    <property type="protein sequence ID" value="BAC27268.1"/>
    <property type="molecule type" value="mRNA"/>
</dbReference>
<dbReference type="EMBL" id="AK145812">
    <property type="protein sequence ID" value="BAE26666.1"/>
    <property type="molecule type" value="mRNA"/>
</dbReference>
<dbReference type="EMBL" id="AK164797">
    <property type="protein sequence ID" value="BAE37923.1"/>
    <property type="molecule type" value="mRNA"/>
</dbReference>
<dbReference type="EMBL" id="AK170045">
    <property type="protein sequence ID" value="BAE41529.1"/>
    <property type="molecule type" value="mRNA"/>
</dbReference>
<dbReference type="EMBL" id="BC006050">
    <property type="protein sequence ID" value="AAH06050.1"/>
    <property type="molecule type" value="mRNA"/>
</dbReference>
<dbReference type="EMBL" id="BC117795">
    <property type="protein sequence ID" value="AAI17796.1"/>
    <property type="molecule type" value="mRNA"/>
</dbReference>
<dbReference type="EMBL" id="BC117796">
    <property type="protein sequence ID" value="AAI17797.1"/>
    <property type="molecule type" value="mRNA"/>
</dbReference>
<dbReference type="CCDS" id="CCDS29158.1"/>
<dbReference type="RefSeq" id="NP_001076786.1">
    <property type="nucleotide sequence ID" value="NM_001083317.2"/>
</dbReference>
<dbReference type="RefSeq" id="NP_001347918.1">
    <property type="nucleotide sequence ID" value="NM_001360989.2"/>
</dbReference>
<dbReference type="RefSeq" id="NP_080680.2">
    <property type="nucleotide sequence ID" value="NM_026404.3"/>
</dbReference>
<dbReference type="RefSeq" id="XP_011245288.1">
    <property type="nucleotide sequence ID" value="XM_011246986.1"/>
</dbReference>
<dbReference type="SMR" id="Q9D321"/>
<dbReference type="FunCoup" id="Q9D321">
    <property type="interactions" value="798"/>
</dbReference>
<dbReference type="STRING" id="10090.ENSMUSP00000140615"/>
<dbReference type="PhosphoSitePlus" id="Q9D321"/>
<dbReference type="PaxDb" id="10090-ENSMUSP00000036081"/>
<dbReference type="Antibodypedia" id="45451">
    <property type="antibodies" value="23 antibodies from 13 providers"/>
</dbReference>
<dbReference type="DNASU" id="67843"/>
<dbReference type="Ensembl" id="ENSMUST00000036158.7">
    <property type="protein sequence ID" value="ENSMUSP00000036081.7"/>
    <property type="gene ID" value="ENSMUSG00000033272.14"/>
</dbReference>
<dbReference type="Ensembl" id="ENSMUST00000050476.11">
    <property type="protein sequence ID" value="ENSMUSP00000129718.2"/>
    <property type="gene ID" value="ENSMUSG00000033272.14"/>
</dbReference>
<dbReference type="GeneID" id="67843"/>
<dbReference type="KEGG" id="mmu:67843"/>
<dbReference type="UCSC" id="uc008eob.1">
    <property type="organism name" value="mouse"/>
</dbReference>
<dbReference type="AGR" id="MGI:1915093"/>
<dbReference type="CTD" id="113829"/>
<dbReference type="MGI" id="MGI:1915093">
    <property type="gene designation" value="Slc35a4"/>
</dbReference>
<dbReference type="VEuPathDB" id="HostDB:ENSMUSG00000033272"/>
<dbReference type="eggNOG" id="KOG2234">
    <property type="taxonomic scope" value="Eukaryota"/>
</dbReference>
<dbReference type="GeneTree" id="ENSGT00950000182827"/>
<dbReference type="HOGENOM" id="CLU_024645_5_1_1"/>
<dbReference type="InParanoid" id="Q9D321"/>
<dbReference type="OMA" id="SSCVVMI"/>
<dbReference type="OrthoDB" id="419167at2759"/>
<dbReference type="PhylomeDB" id="Q9D321"/>
<dbReference type="TreeFam" id="TF315345"/>
<dbReference type="BioGRID-ORCS" id="67843">
    <property type="hits" value="0 hits in 78 CRISPR screens"/>
</dbReference>
<dbReference type="ChiTaRS" id="Slc35a4">
    <property type="organism name" value="mouse"/>
</dbReference>
<dbReference type="Proteomes" id="UP000000589">
    <property type="component" value="Chromosome 18"/>
</dbReference>
<dbReference type="RNAct" id="Q9D321">
    <property type="molecule type" value="protein"/>
</dbReference>
<dbReference type="Bgee" id="ENSMUSG00000033272">
    <property type="expression patterns" value="Expressed in embryonic post-anal tail and 250 other cell types or tissues"/>
</dbReference>
<dbReference type="ExpressionAtlas" id="Q9D321">
    <property type="expression patterns" value="baseline and differential"/>
</dbReference>
<dbReference type="GO" id="GO:0005794">
    <property type="term" value="C:Golgi apparatus"/>
    <property type="evidence" value="ECO:0000250"/>
    <property type="project" value="UniProtKB"/>
</dbReference>
<dbReference type="GO" id="GO:0000139">
    <property type="term" value="C:Golgi membrane"/>
    <property type="evidence" value="ECO:0000250"/>
    <property type="project" value="UniProtKB"/>
</dbReference>
<dbReference type="GO" id="GO:0015165">
    <property type="term" value="F:pyrimidine nucleotide-sugar transmembrane transporter activity"/>
    <property type="evidence" value="ECO:0007669"/>
    <property type="project" value="InterPro"/>
</dbReference>
<dbReference type="Gene3D" id="1.10.3730.20">
    <property type="match status" value="1"/>
</dbReference>
<dbReference type="InterPro" id="IPR007271">
    <property type="entry name" value="Nuc_sug_transpt"/>
</dbReference>
<dbReference type="PANTHER" id="PTHR10231">
    <property type="entry name" value="NUCLEOTIDE-SUGAR TRANSMEMBRANE TRANSPORTER"/>
    <property type="match status" value="1"/>
</dbReference>
<dbReference type="Pfam" id="PF04142">
    <property type="entry name" value="Nuc_sug_transp"/>
    <property type="match status" value="1"/>
</dbReference>
<dbReference type="PIRSF" id="PIRSF005799">
    <property type="entry name" value="UDP-gal_transpt"/>
    <property type="match status" value="1"/>
</dbReference>
<dbReference type="SUPFAM" id="SSF103481">
    <property type="entry name" value="Multidrug resistance efflux transporter EmrE"/>
    <property type="match status" value="1"/>
</dbReference>
<sequence>MSVEDGGVPGLARPRQARWTLLLFLSTAMYGAHAPFLALCHVDGRVPFRPSSAVLLTELTKLLLCAFSLLVGWQTWPQGTPPWRQAVPFALSALLYGANNNLVIYLQRYMDPSTYQVLSNLKIGSTALLYCLCLGHRLSARQGLALLLLMAAGACYASGGFQEPVNTLPGPASAAGAHPMPLHITPLGLLLLILYCLISGLSSVYTELIMKRQRLPLALQNLFLYTFGVILNFGLYAGSGPGPGFLEGFSGWAVLVVLNQAVNGLLMSAVMKHGSSITRLFIVSCSLVVNAVLSAVLLQLQLTAIFFLAALLIGLAVCLYYGSP</sequence>
<proteinExistence type="evidence at transcript level"/>
<gene>
    <name evidence="5" type="primary">Slc35a4</name>
</gene>
<comment type="function">
    <text evidence="2">Mediates the transport of CDP-ribitol (By similarity). Does not exhibit CMP-sialic acid, UDP-galactose and UDP-N-acetylglucosamine transport activity (By similarity).</text>
</comment>
<comment type="catalytic activity">
    <reaction evidence="2">
        <text>CDP-L-ribitol(in) + CDP(out) = CDP-L-ribitol(out) + CDP(in)</text>
        <dbReference type="Rhea" id="RHEA:71579"/>
        <dbReference type="ChEBI" id="CHEBI:57608"/>
        <dbReference type="ChEBI" id="CHEBI:58069"/>
    </reaction>
</comment>
<comment type="subunit">
    <text evidence="2">Found in a complex with SLC35A2 and SLC35A3.</text>
</comment>
<comment type="subcellular location">
    <subcellularLocation>
        <location evidence="1">Golgi apparatus membrane</location>
        <topology evidence="3">Multi-pass membrane protein</topology>
    </subcellularLocation>
</comment>
<comment type="similarity">
    <text evidence="4">Belongs to the nucleotide-sugar transporter family. SLC35A subfamily.</text>
</comment>
<keyword id="KW-0333">Golgi apparatus</keyword>
<keyword id="KW-0472">Membrane</keyword>
<keyword id="KW-1185">Reference proteome</keyword>
<keyword id="KW-0762">Sugar transport</keyword>
<keyword id="KW-0812">Transmembrane</keyword>
<keyword id="KW-1133">Transmembrane helix</keyword>
<keyword id="KW-0813">Transport</keyword>
<feature type="chain" id="PRO_0000337749" description="Probable UDP-sugar transporter protein SLC35A4">
    <location>
        <begin position="1"/>
        <end position="324"/>
    </location>
</feature>
<feature type="topological domain" description="Cytoplasmic" evidence="2">
    <location>
        <begin position="1"/>
        <end position="18"/>
    </location>
</feature>
<feature type="transmembrane region" description="Helical" evidence="3">
    <location>
        <begin position="19"/>
        <end position="39"/>
    </location>
</feature>
<feature type="topological domain" description="Lumenal" evidence="2">
    <location>
        <begin position="40"/>
        <end position="52"/>
    </location>
</feature>
<feature type="transmembrane region" description="Helical" evidence="3">
    <location>
        <begin position="53"/>
        <end position="73"/>
    </location>
</feature>
<feature type="topological domain" description="Cytoplasmic" evidence="2">
    <location>
        <begin position="74"/>
        <end position="85"/>
    </location>
</feature>
<feature type="transmembrane region" description="Helical" evidence="3">
    <location>
        <begin position="86"/>
        <end position="106"/>
    </location>
</feature>
<feature type="topological domain" description="Lumenal" evidence="2">
    <location>
        <begin position="107"/>
        <end position="142"/>
    </location>
</feature>
<feature type="transmembrane region" description="Helical" evidence="3">
    <location>
        <begin position="143"/>
        <end position="163"/>
    </location>
</feature>
<feature type="topological domain" description="Cytoplasmic" evidence="2">
    <location>
        <begin position="164"/>
        <end position="180"/>
    </location>
</feature>
<feature type="transmembrane region" description="Helical" evidence="3">
    <location>
        <begin position="181"/>
        <end position="201"/>
    </location>
</feature>
<feature type="topological domain" description="Lumenal" evidence="2">
    <location>
        <begin position="202"/>
        <end position="214"/>
    </location>
</feature>
<feature type="transmembrane region" description="Helical" evidence="3">
    <location>
        <begin position="215"/>
        <end position="235"/>
    </location>
</feature>
<feature type="topological domain" description="Cytoplasmic" evidence="2">
    <location>
        <begin position="236"/>
        <end position="248"/>
    </location>
</feature>
<feature type="transmembrane region" description="Helical" evidence="3">
    <location>
        <begin position="249"/>
        <end position="271"/>
    </location>
</feature>
<feature type="topological domain" description="Lumenal" evidence="2">
    <location>
        <begin position="272"/>
        <end position="279"/>
    </location>
</feature>
<feature type="transmembrane region" description="Helical" evidence="3">
    <location>
        <begin position="280"/>
        <end position="300"/>
    </location>
</feature>
<feature type="topological domain" description="Cytoplasmic" evidence="2">
    <location>
        <begin position="301"/>
        <end position="324"/>
    </location>
</feature>
<feature type="sequence conflict" description="In Ref. 1; BAC27268." evidence="4" ref="1">
    <original>A</original>
    <variation>V</variation>
    <location>
        <position position="157"/>
    </location>
</feature>
<feature type="sequence conflict" description="In Ref. 1; BAB27747." evidence="4" ref="1">
    <original>L</original>
    <variation>F</variation>
    <location>
        <position position="168"/>
    </location>
</feature>
<feature type="sequence conflict" description="In Ref. 2; AAH06050." evidence="4" ref="2">
    <original>G</original>
    <variation>GP</variation>
    <location>
        <position position="170"/>
    </location>
</feature>
<feature type="sequence conflict" description="In Ref. 2; AAH06050." evidence="4" ref="2">
    <original>F</original>
    <variation>L</variation>
    <location>
        <position position="233"/>
    </location>
</feature>
<accession>Q9D321</accession>
<accession>Q8BMH3</accession>
<accession>Q99JK8</accession>
<accession>Q9D0A7</accession>
<organism>
    <name type="scientific">Mus musculus</name>
    <name type="common">Mouse</name>
    <dbReference type="NCBI Taxonomy" id="10090"/>
    <lineage>
        <taxon>Eukaryota</taxon>
        <taxon>Metazoa</taxon>
        <taxon>Chordata</taxon>
        <taxon>Craniata</taxon>
        <taxon>Vertebrata</taxon>
        <taxon>Euteleostomi</taxon>
        <taxon>Mammalia</taxon>
        <taxon>Eutheria</taxon>
        <taxon>Euarchontoglires</taxon>
        <taxon>Glires</taxon>
        <taxon>Rodentia</taxon>
        <taxon>Myomorpha</taxon>
        <taxon>Muroidea</taxon>
        <taxon>Muridae</taxon>
        <taxon>Murinae</taxon>
        <taxon>Mus</taxon>
        <taxon>Mus</taxon>
    </lineage>
</organism>